<proteinExistence type="inferred from homology"/>
<protein>
    <recommendedName>
        <fullName evidence="1">6,7-dimethyl-8-ribityllumazine synthase</fullName>
        <shortName evidence="1">DMRL synthase</shortName>
        <shortName evidence="1">LS</shortName>
        <shortName evidence="1">Lumazine synthase</shortName>
        <ecNumber evidence="1">2.5.1.78</ecNumber>
    </recommendedName>
</protein>
<feature type="chain" id="PRO_0000134847" description="6,7-dimethyl-8-ribityllumazine synthase">
    <location>
        <begin position="1"/>
        <end position="139"/>
    </location>
</feature>
<feature type="active site" description="Proton donor" evidence="1">
    <location>
        <position position="77"/>
    </location>
</feature>
<feature type="binding site" evidence="1">
    <location>
        <position position="13"/>
    </location>
    <ligand>
        <name>5-amino-6-(D-ribitylamino)uracil</name>
        <dbReference type="ChEBI" id="CHEBI:15934"/>
    </ligand>
</feature>
<feature type="binding site" evidence="1">
    <location>
        <begin position="45"/>
        <end position="47"/>
    </location>
    <ligand>
        <name>5-amino-6-(D-ribitylamino)uracil</name>
        <dbReference type="ChEBI" id="CHEBI:15934"/>
    </ligand>
</feature>
<feature type="binding site" evidence="1">
    <location>
        <begin position="69"/>
        <end position="71"/>
    </location>
    <ligand>
        <name>5-amino-6-(D-ribitylamino)uracil</name>
        <dbReference type="ChEBI" id="CHEBI:15934"/>
    </ligand>
</feature>
<feature type="binding site" evidence="1">
    <location>
        <begin position="74"/>
        <end position="75"/>
    </location>
    <ligand>
        <name>(2S)-2-hydroxy-3-oxobutyl phosphate</name>
        <dbReference type="ChEBI" id="CHEBI:58830"/>
    </ligand>
</feature>
<feature type="binding site" evidence="1">
    <location>
        <position position="102"/>
    </location>
    <ligand>
        <name>5-amino-6-(D-ribitylamino)uracil</name>
        <dbReference type="ChEBI" id="CHEBI:15934"/>
    </ligand>
</feature>
<feature type="binding site" evidence="1">
    <location>
        <position position="117"/>
    </location>
    <ligand>
        <name>(2S)-2-hydroxy-3-oxobutyl phosphate</name>
        <dbReference type="ChEBI" id="CHEBI:58830"/>
    </ligand>
</feature>
<sequence length="139" mass="15464">MKKVRIGAVVAEFNYDITHMMLELAKEHARFLDAEITRVIAVPGVFDMPLAVKKLLLEDEIDAVITLGAVIEGATDHDQIVVQHASRKIADLALDYDKPVALGISGPGMTRLEAHQRVDYAKRAVEAAVKMYRRLKEDI</sequence>
<accession>O27443</accession>
<name>RISB_METTH</name>
<organism>
    <name type="scientific">Methanothermobacter thermautotrophicus (strain ATCC 29096 / DSM 1053 / JCM 10044 / NBRC 100330 / Delta H)</name>
    <name type="common">Methanobacterium thermoautotrophicum</name>
    <dbReference type="NCBI Taxonomy" id="187420"/>
    <lineage>
        <taxon>Archaea</taxon>
        <taxon>Methanobacteriati</taxon>
        <taxon>Methanobacteriota</taxon>
        <taxon>Methanomada group</taxon>
        <taxon>Methanobacteria</taxon>
        <taxon>Methanobacteriales</taxon>
        <taxon>Methanobacteriaceae</taxon>
        <taxon>Methanothermobacter</taxon>
    </lineage>
</organism>
<reference key="1">
    <citation type="journal article" date="1997" name="J. Bacteriol.">
        <title>Complete genome sequence of Methanobacterium thermoautotrophicum deltaH: functional analysis and comparative genomics.</title>
        <authorList>
            <person name="Smith D.R."/>
            <person name="Doucette-Stamm L.A."/>
            <person name="Deloughery C."/>
            <person name="Lee H.-M."/>
            <person name="Dubois J."/>
            <person name="Aldredge T."/>
            <person name="Bashirzadeh R."/>
            <person name="Blakely D."/>
            <person name="Cook R."/>
            <person name="Gilbert K."/>
            <person name="Harrison D."/>
            <person name="Hoang L."/>
            <person name="Keagle P."/>
            <person name="Lumm W."/>
            <person name="Pothier B."/>
            <person name="Qiu D."/>
            <person name="Spadafora R."/>
            <person name="Vicare R."/>
            <person name="Wang Y."/>
            <person name="Wierzbowski J."/>
            <person name="Gibson R."/>
            <person name="Jiwani N."/>
            <person name="Caruso A."/>
            <person name="Bush D."/>
            <person name="Safer H."/>
            <person name="Patwell D."/>
            <person name="Prabhakar S."/>
            <person name="McDougall S."/>
            <person name="Shimer G."/>
            <person name="Goyal A."/>
            <person name="Pietrovski S."/>
            <person name="Church G.M."/>
            <person name="Daniels C.J."/>
            <person name="Mao J.-I."/>
            <person name="Rice P."/>
            <person name="Noelling J."/>
            <person name="Reeve J.N."/>
        </authorList>
    </citation>
    <scope>NUCLEOTIDE SEQUENCE [LARGE SCALE GENOMIC DNA]</scope>
    <source>
        <strain>ATCC 29096 / DSM 1053 / JCM 10044 / NBRC 100330 / Delta H</strain>
    </source>
</reference>
<dbReference type="EC" id="2.5.1.78" evidence="1"/>
<dbReference type="EMBL" id="AE000666">
    <property type="protein sequence ID" value="AAB85867.1"/>
    <property type="molecule type" value="Genomic_DNA"/>
</dbReference>
<dbReference type="PIR" id="A69052">
    <property type="entry name" value="A69052"/>
</dbReference>
<dbReference type="RefSeq" id="WP_010877002.1">
    <property type="nucleotide sequence ID" value="NC_000916.1"/>
</dbReference>
<dbReference type="SMR" id="O27443"/>
<dbReference type="FunCoup" id="O27443">
    <property type="interactions" value="99"/>
</dbReference>
<dbReference type="STRING" id="187420.MTH_1390"/>
<dbReference type="PaxDb" id="187420-MTH_1390"/>
<dbReference type="EnsemblBacteria" id="AAB85867">
    <property type="protein sequence ID" value="AAB85867"/>
    <property type="gene ID" value="MTH_1390"/>
</dbReference>
<dbReference type="GeneID" id="82297827"/>
<dbReference type="KEGG" id="mth:MTH_1390"/>
<dbReference type="PATRIC" id="fig|187420.15.peg.1355"/>
<dbReference type="HOGENOM" id="CLU_089358_3_1_2"/>
<dbReference type="InParanoid" id="O27443"/>
<dbReference type="BRENDA" id="2.5.1.78">
    <property type="organism ID" value="3256"/>
</dbReference>
<dbReference type="UniPathway" id="UPA00275">
    <property type="reaction ID" value="UER00404"/>
</dbReference>
<dbReference type="Proteomes" id="UP000005223">
    <property type="component" value="Chromosome"/>
</dbReference>
<dbReference type="GO" id="GO:0009349">
    <property type="term" value="C:riboflavin synthase complex"/>
    <property type="evidence" value="ECO:0007669"/>
    <property type="project" value="InterPro"/>
</dbReference>
<dbReference type="GO" id="GO:0000906">
    <property type="term" value="F:6,7-dimethyl-8-ribityllumazine synthase activity"/>
    <property type="evidence" value="ECO:0007669"/>
    <property type="project" value="UniProtKB-UniRule"/>
</dbReference>
<dbReference type="GO" id="GO:0009231">
    <property type="term" value="P:riboflavin biosynthetic process"/>
    <property type="evidence" value="ECO:0007669"/>
    <property type="project" value="UniProtKB-UniRule"/>
</dbReference>
<dbReference type="CDD" id="cd09211">
    <property type="entry name" value="Lumazine_synthase_archaeal"/>
    <property type="match status" value="1"/>
</dbReference>
<dbReference type="FunFam" id="3.40.50.960:FF:000003">
    <property type="entry name" value="6,7-dimethyl-8-ribityllumazine synthase"/>
    <property type="match status" value="1"/>
</dbReference>
<dbReference type="Gene3D" id="3.40.50.960">
    <property type="entry name" value="Lumazine/riboflavin synthase"/>
    <property type="match status" value="1"/>
</dbReference>
<dbReference type="HAMAP" id="MF_00178">
    <property type="entry name" value="Lumazine_synth"/>
    <property type="match status" value="1"/>
</dbReference>
<dbReference type="InterPro" id="IPR034964">
    <property type="entry name" value="LS"/>
</dbReference>
<dbReference type="InterPro" id="IPR002180">
    <property type="entry name" value="LS/RS"/>
</dbReference>
<dbReference type="InterPro" id="IPR036467">
    <property type="entry name" value="LS/RS_sf"/>
</dbReference>
<dbReference type="NCBIfam" id="TIGR00114">
    <property type="entry name" value="lumazine-synth"/>
    <property type="match status" value="1"/>
</dbReference>
<dbReference type="PANTHER" id="PTHR21058:SF0">
    <property type="entry name" value="6,7-DIMETHYL-8-RIBITYLLUMAZINE SYNTHASE"/>
    <property type="match status" value="1"/>
</dbReference>
<dbReference type="PANTHER" id="PTHR21058">
    <property type="entry name" value="6,7-DIMETHYL-8-RIBITYLLUMAZINE SYNTHASE DMRL SYNTHASE LUMAZINE SYNTHASE"/>
    <property type="match status" value="1"/>
</dbReference>
<dbReference type="Pfam" id="PF00885">
    <property type="entry name" value="DMRL_synthase"/>
    <property type="match status" value="1"/>
</dbReference>
<dbReference type="SUPFAM" id="SSF52121">
    <property type="entry name" value="Lumazine synthase"/>
    <property type="match status" value="1"/>
</dbReference>
<keyword id="KW-1185">Reference proteome</keyword>
<keyword id="KW-0686">Riboflavin biosynthesis</keyword>
<keyword id="KW-0808">Transferase</keyword>
<comment type="function">
    <text evidence="1">Catalyzes the formation of 6,7-dimethyl-8-ribityllumazine by condensation of 5-amino-6-(D-ribitylamino)uracil with 3,4-dihydroxy-2-butanone 4-phosphate. This is the penultimate step in the biosynthesis of riboflavin.</text>
</comment>
<comment type="catalytic activity">
    <reaction evidence="1">
        <text>(2S)-2-hydroxy-3-oxobutyl phosphate + 5-amino-6-(D-ribitylamino)uracil = 6,7-dimethyl-8-(1-D-ribityl)lumazine + phosphate + 2 H2O + H(+)</text>
        <dbReference type="Rhea" id="RHEA:26152"/>
        <dbReference type="ChEBI" id="CHEBI:15377"/>
        <dbReference type="ChEBI" id="CHEBI:15378"/>
        <dbReference type="ChEBI" id="CHEBI:15934"/>
        <dbReference type="ChEBI" id="CHEBI:43474"/>
        <dbReference type="ChEBI" id="CHEBI:58201"/>
        <dbReference type="ChEBI" id="CHEBI:58830"/>
        <dbReference type="EC" id="2.5.1.78"/>
    </reaction>
</comment>
<comment type="pathway">
    <text evidence="1">Cofactor biosynthesis; riboflavin biosynthesis; riboflavin from 2-hydroxy-3-oxobutyl phosphate and 5-amino-6-(D-ribitylamino)uracil: step 1/2.</text>
</comment>
<comment type="similarity">
    <text evidence="1">Belongs to the DMRL synthase family.</text>
</comment>
<evidence type="ECO:0000255" key="1">
    <source>
        <dbReference type="HAMAP-Rule" id="MF_00178"/>
    </source>
</evidence>
<gene>
    <name evidence="1" type="primary">ribH</name>
    <name type="ordered locus">MTH_1390</name>
</gene>